<sequence length="269" mass="28931">MTESEKRKSRITTRTLQRMRDRGERITMLTAYDFPTAKILDEAGVDVLLVGDTVGMVVQGHSTTLPVTMDQMIYHAEMVGRAADHAMVVVDLPFPDGQLDLLHSVRCGARVLKETQCHAVKLEGGAEQAERIEAMVGAGIPVMAHIGLRPQNIHVEGGYRLQRDIERLVADAKAAEAAGAFTVLIECVPSEAAAAITDAVKVPTIGIGAGRDVSGQVLVTHDILGLTSGYTPKFTRLFADVGNTIREAAKSYCDEVKAASFPSDAESFE</sequence>
<keyword id="KW-0963">Cytoplasm</keyword>
<keyword id="KW-0460">Magnesium</keyword>
<keyword id="KW-0479">Metal-binding</keyword>
<keyword id="KW-0566">Pantothenate biosynthesis</keyword>
<keyword id="KW-1185">Reference proteome</keyword>
<keyword id="KW-0808">Transferase</keyword>
<feature type="chain" id="PRO_0000184882" description="3-methyl-2-oxobutanoate hydroxymethyltransferase">
    <location>
        <begin position="1"/>
        <end position="269"/>
    </location>
</feature>
<feature type="active site" description="Proton acceptor" evidence="1">
    <location>
        <position position="186"/>
    </location>
</feature>
<feature type="binding site" evidence="1">
    <location>
        <begin position="52"/>
        <end position="53"/>
    </location>
    <ligand>
        <name>3-methyl-2-oxobutanoate</name>
        <dbReference type="ChEBI" id="CHEBI:11851"/>
    </ligand>
</feature>
<feature type="binding site" evidence="1">
    <location>
        <position position="52"/>
    </location>
    <ligand>
        <name>Mg(2+)</name>
        <dbReference type="ChEBI" id="CHEBI:18420"/>
    </ligand>
</feature>
<feature type="binding site" evidence="1">
    <location>
        <position position="91"/>
    </location>
    <ligand>
        <name>3-methyl-2-oxobutanoate</name>
        <dbReference type="ChEBI" id="CHEBI:11851"/>
    </ligand>
</feature>
<feature type="binding site" evidence="1">
    <location>
        <position position="91"/>
    </location>
    <ligand>
        <name>Mg(2+)</name>
        <dbReference type="ChEBI" id="CHEBI:18420"/>
    </ligand>
</feature>
<feature type="binding site" evidence="1">
    <location>
        <position position="121"/>
    </location>
    <ligand>
        <name>3-methyl-2-oxobutanoate</name>
        <dbReference type="ChEBI" id="CHEBI:11851"/>
    </ligand>
</feature>
<feature type="binding site" evidence="1">
    <location>
        <position position="123"/>
    </location>
    <ligand>
        <name>Mg(2+)</name>
        <dbReference type="ChEBI" id="CHEBI:18420"/>
    </ligand>
</feature>
<protein>
    <recommendedName>
        <fullName evidence="1">3-methyl-2-oxobutanoate hydroxymethyltransferase</fullName>
        <ecNumber evidence="1">2.1.2.11</ecNumber>
    </recommendedName>
    <alternativeName>
        <fullName evidence="1">Ketopantoate hydroxymethyltransferase</fullName>
        <shortName evidence="1">KPHMT</shortName>
    </alternativeName>
</protein>
<evidence type="ECO:0000255" key="1">
    <source>
        <dbReference type="HAMAP-Rule" id="MF_00156"/>
    </source>
</evidence>
<gene>
    <name evidence="1" type="primary">panB</name>
    <name type="ordered locus">RB9090</name>
</gene>
<proteinExistence type="inferred from homology"/>
<name>PANB_RHOBA</name>
<reference key="1">
    <citation type="journal article" date="2003" name="Proc. Natl. Acad. Sci. U.S.A.">
        <title>Complete genome sequence of the marine planctomycete Pirellula sp. strain 1.</title>
        <authorList>
            <person name="Gloeckner F.O."/>
            <person name="Kube M."/>
            <person name="Bauer M."/>
            <person name="Teeling H."/>
            <person name="Lombardot T."/>
            <person name="Ludwig W."/>
            <person name="Gade D."/>
            <person name="Beck A."/>
            <person name="Borzym K."/>
            <person name="Heitmann K."/>
            <person name="Rabus R."/>
            <person name="Schlesner H."/>
            <person name="Amann R."/>
            <person name="Reinhardt R."/>
        </authorList>
    </citation>
    <scope>NUCLEOTIDE SEQUENCE [LARGE SCALE GENOMIC DNA]</scope>
    <source>
        <strain>DSM 10527 / NCIMB 13988 / SH1</strain>
    </source>
</reference>
<organism>
    <name type="scientific">Rhodopirellula baltica (strain DSM 10527 / NCIMB 13988 / SH1)</name>
    <dbReference type="NCBI Taxonomy" id="243090"/>
    <lineage>
        <taxon>Bacteria</taxon>
        <taxon>Pseudomonadati</taxon>
        <taxon>Planctomycetota</taxon>
        <taxon>Planctomycetia</taxon>
        <taxon>Pirellulales</taxon>
        <taxon>Pirellulaceae</taxon>
        <taxon>Rhodopirellula</taxon>
    </lineage>
</organism>
<accession>Q7UM39</accession>
<comment type="function">
    <text evidence="1">Catalyzes the reversible reaction in which hydroxymethyl group from 5,10-methylenetetrahydrofolate is transferred onto alpha-ketoisovalerate to form ketopantoate.</text>
</comment>
<comment type="catalytic activity">
    <reaction evidence="1">
        <text>3-methyl-2-oxobutanoate + (6R)-5,10-methylene-5,6,7,8-tetrahydrofolate + H2O = 2-dehydropantoate + (6S)-5,6,7,8-tetrahydrofolate</text>
        <dbReference type="Rhea" id="RHEA:11824"/>
        <dbReference type="ChEBI" id="CHEBI:11561"/>
        <dbReference type="ChEBI" id="CHEBI:11851"/>
        <dbReference type="ChEBI" id="CHEBI:15377"/>
        <dbReference type="ChEBI" id="CHEBI:15636"/>
        <dbReference type="ChEBI" id="CHEBI:57453"/>
        <dbReference type="EC" id="2.1.2.11"/>
    </reaction>
</comment>
<comment type="cofactor">
    <cofactor evidence="1">
        <name>Mg(2+)</name>
        <dbReference type="ChEBI" id="CHEBI:18420"/>
    </cofactor>
    <text evidence="1">Binds 1 Mg(2+) ion per subunit.</text>
</comment>
<comment type="pathway">
    <text evidence="1">Cofactor biosynthesis; (R)-pantothenate biosynthesis; (R)-pantoate from 3-methyl-2-oxobutanoate: step 1/2.</text>
</comment>
<comment type="subunit">
    <text evidence="1">Homodecamer; pentamer of dimers.</text>
</comment>
<comment type="subcellular location">
    <subcellularLocation>
        <location evidence="1">Cytoplasm</location>
    </subcellularLocation>
</comment>
<comment type="similarity">
    <text evidence="1">Belongs to the PanB family.</text>
</comment>
<dbReference type="EC" id="2.1.2.11" evidence="1"/>
<dbReference type="EMBL" id="BX294148">
    <property type="protein sequence ID" value="CAD76078.1"/>
    <property type="molecule type" value="Genomic_DNA"/>
</dbReference>
<dbReference type="RefSeq" id="NP_868701.1">
    <property type="nucleotide sequence ID" value="NC_005027.1"/>
</dbReference>
<dbReference type="RefSeq" id="WP_011122138.1">
    <property type="nucleotide sequence ID" value="NC_005027.1"/>
</dbReference>
<dbReference type="SMR" id="Q7UM39"/>
<dbReference type="FunCoup" id="Q7UM39">
    <property type="interactions" value="421"/>
</dbReference>
<dbReference type="STRING" id="243090.RB9090"/>
<dbReference type="EnsemblBacteria" id="CAD76078">
    <property type="protein sequence ID" value="CAD76078"/>
    <property type="gene ID" value="RB9090"/>
</dbReference>
<dbReference type="KEGG" id="rba:RB9090"/>
<dbReference type="PATRIC" id="fig|243090.15.peg.4356"/>
<dbReference type="eggNOG" id="COG0413">
    <property type="taxonomic scope" value="Bacteria"/>
</dbReference>
<dbReference type="HOGENOM" id="CLU_036645_1_0_0"/>
<dbReference type="InParanoid" id="Q7UM39"/>
<dbReference type="OrthoDB" id="9781789at2"/>
<dbReference type="UniPathway" id="UPA00028">
    <property type="reaction ID" value="UER00003"/>
</dbReference>
<dbReference type="Proteomes" id="UP000001025">
    <property type="component" value="Chromosome"/>
</dbReference>
<dbReference type="GO" id="GO:0005737">
    <property type="term" value="C:cytoplasm"/>
    <property type="evidence" value="ECO:0000318"/>
    <property type="project" value="GO_Central"/>
</dbReference>
<dbReference type="GO" id="GO:0003864">
    <property type="term" value="F:3-methyl-2-oxobutanoate hydroxymethyltransferase activity"/>
    <property type="evidence" value="ECO:0000318"/>
    <property type="project" value="GO_Central"/>
</dbReference>
<dbReference type="GO" id="GO:0000287">
    <property type="term" value="F:magnesium ion binding"/>
    <property type="evidence" value="ECO:0000318"/>
    <property type="project" value="GO_Central"/>
</dbReference>
<dbReference type="GO" id="GO:0015940">
    <property type="term" value="P:pantothenate biosynthetic process"/>
    <property type="evidence" value="ECO:0000318"/>
    <property type="project" value="GO_Central"/>
</dbReference>
<dbReference type="CDD" id="cd06557">
    <property type="entry name" value="KPHMT-like"/>
    <property type="match status" value="1"/>
</dbReference>
<dbReference type="FunFam" id="3.20.20.60:FF:000107">
    <property type="entry name" value="3-methyl-2-oxobutanoate hydroxymethyltransferase"/>
    <property type="match status" value="1"/>
</dbReference>
<dbReference type="Gene3D" id="3.20.20.60">
    <property type="entry name" value="Phosphoenolpyruvate-binding domains"/>
    <property type="match status" value="1"/>
</dbReference>
<dbReference type="HAMAP" id="MF_00156">
    <property type="entry name" value="PanB"/>
    <property type="match status" value="1"/>
</dbReference>
<dbReference type="InterPro" id="IPR003700">
    <property type="entry name" value="Pantoate_hydroxy_MeTrfase"/>
</dbReference>
<dbReference type="InterPro" id="IPR015813">
    <property type="entry name" value="Pyrv/PenolPyrv_kinase-like_dom"/>
</dbReference>
<dbReference type="InterPro" id="IPR040442">
    <property type="entry name" value="Pyrv_kinase-like_dom_sf"/>
</dbReference>
<dbReference type="NCBIfam" id="TIGR00222">
    <property type="entry name" value="panB"/>
    <property type="match status" value="1"/>
</dbReference>
<dbReference type="NCBIfam" id="NF001452">
    <property type="entry name" value="PRK00311.1"/>
    <property type="match status" value="1"/>
</dbReference>
<dbReference type="PANTHER" id="PTHR20881">
    <property type="entry name" value="3-METHYL-2-OXOBUTANOATE HYDROXYMETHYLTRANSFERASE"/>
    <property type="match status" value="1"/>
</dbReference>
<dbReference type="PANTHER" id="PTHR20881:SF0">
    <property type="entry name" value="3-METHYL-2-OXOBUTANOATE HYDROXYMETHYLTRANSFERASE"/>
    <property type="match status" value="1"/>
</dbReference>
<dbReference type="Pfam" id="PF02548">
    <property type="entry name" value="Pantoate_transf"/>
    <property type="match status" value="1"/>
</dbReference>
<dbReference type="PIRSF" id="PIRSF000388">
    <property type="entry name" value="Pantoate_hydroxy_MeTrfase"/>
    <property type="match status" value="1"/>
</dbReference>
<dbReference type="SUPFAM" id="SSF51621">
    <property type="entry name" value="Phosphoenolpyruvate/pyruvate domain"/>
    <property type="match status" value="1"/>
</dbReference>